<comment type="subunit">
    <text evidence="1">Part of the 50S ribosomal subunit. Contacts protein L32.</text>
</comment>
<comment type="similarity">
    <text evidence="1">Belongs to the bacterial ribosomal protein bL17 family.</text>
</comment>
<proteinExistence type="inferred from homology"/>
<protein>
    <recommendedName>
        <fullName evidence="1">Large ribosomal subunit protein bL17</fullName>
    </recommendedName>
    <alternativeName>
        <fullName evidence="2">50S ribosomal protein L17</fullName>
    </alternativeName>
</protein>
<name>RL17_BARQU</name>
<organism>
    <name type="scientific">Bartonella quintana (strain Toulouse)</name>
    <name type="common">Rochalimaea quintana</name>
    <dbReference type="NCBI Taxonomy" id="283165"/>
    <lineage>
        <taxon>Bacteria</taxon>
        <taxon>Pseudomonadati</taxon>
        <taxon>Pseudomonadota</taxon>
        <taxon>Alphaproteobacteria</taxon>
        <taxon>Hyphomicrobiales</taxon>
        <taxon>Bartonellaceae</taxon>
        <taxon>Bartonella</taxon>
    </lineage>
</organism>
<reference key="1">
    <citation type="journal article" date="2004" name="Proc. Natl. Acad. Sci. U.S.A.">
        <title>The louse-borne human pathogen Bartonella quintana is a genomic derivative of the zoonotic agent Bartonella henselae.</title>
        <authorList>
            <person name="Alsmark U.C.M."/>
            <person name="Frank A.C."/>
            <person name="Karlberg E.O."/>
            <person name="Legault B.-A."/>
            <person name="Ardell D.H."/>
            <person name="Canbaeck B."/>
            <person name="Eriksson A.-S."/>
            <person name="Naeslund A.K."/>
            <person name="Handley S.A."/>
            <person name="Huvet M."/>
            <person name="La Scola B."/>
            <person name="Holmberg M."/>
            <person name="Andersson S.G.E."/>
        </authorList>
    </citation>
    <scope>NUCLEOTIDE SEQUENCE [LARGE SCALE GENOMIC DNA]</scope>
    <source>
        <strain>Toulouse</strain>
    </source>
</reference>
<gene>
    <name evidence="1" type="primary">rplQ</name>
    <name type="ordered locus">BQ07980</name>
</gene>
<sequence>MRHSKSGRKLNRTASHRKAMFANMAISLIEHEQIVTTLPKAKEIRPIVEKLVTLGKRGGLHARRQAIAALRDAGKVAKLFDTLAPRYASRNGGYLRIMKAGFRTGDNAPMAVIEFVDRDVDAKGAVDRARAESAANEKEASSL</sequence>
<accession>Q6FZE7</accession>
<dbReference type="EMBL" id="BX897700">
    <property type="protein sequence ID" value="CAF26281.1"/>
    <property type="molecule type" value="Genomic_DNA"/>
</dbReference>
<dbReference type="RefSeq" id="WP_011179528.1">
    <property type="nucleotide sequence ID" value="NC_005955.1"/>
</dbReference>
<dbReference type="SMR" id="Q6FZE7"/>
<dbReference type="KEGG" id="bqu:BQ07980"/>
<dbReference type="eggNOG" id="COG0203">
    <property type="taxonomic scope" value="Bacteria"/>
</dbReference>
<dbReference type="HOGENOM" id="CLU_074407_2_0_5"/>
<dbReference type="OrthoDB" id="9809073at2"/>
<dbReference type="Proteomes" id="UP000000597">
    <property type="component" value="Chromosome"/>
</dbReference>
<dbReference type="GO" id="GO:0022625">
    <property type="term" value="C:cytosolic large ribosomal subunit"/>
    <property type="evidence" value="ECO:0007669"/>
    <property type="project" value="TreeGrafter"/>
</dbReference>
<dbReference type="GO" id="GO:0003735">
    <property type="term" value="F:structural constituent of ribosome"/>
    <property type="evidence" value="ECO:0007669"/>
    <property type="project" value="InterPro"/>
</dbReference>
<dbReference type="GO" id="GO:0006412">
    <property type="term" value="P:translation"/>
    <property type="evidence" value="ECO:0007669"/>
    <property type="project" value="UniProtKB-UniRule"/>
</dbReference>
<dbReference type="FunFam" id="3.90.1030.10:FF:000001">
    <property type="entry name" value="50S ribosomal protein L17"/>
    <property type="match status" value="1"/>
</dbReference>
<dbReference type="Gene3D" id="3.90.1030.10">
    <property type="entry name" value="Ribosomal protein L17"/>
    <property type="match status" value="1"/>
</dbReference>
<dbReference type="HAMAP" id="MF_01368">
    <property type="entry name" value="Ribosomal_bL17"/>
    <property type="match status" value="1"/>
</dbReference>
<dbReference type="InterPro" id="IPR000456">
    <property type="entry name" value="Ribosomal_bL17"/>
</dbReference>
<dbReference type="InterPro" id="IPR047859">
    <property type="entry name" value="Ribosomal_bL17_CS"/>
</dbReference>
<dbReference type="InterPro" id="IPR036373">
    <property type="entry name" value="Ribosomal_bL17_sf"/>
</dbReference>
<dbReference type="NCBIfam" id="TIGR00059">
    <property type="entry name" value="L17"/>
    <property type="match status" value="1"/>
</dbReference>
<dbReference type="PANTHER" id="PTHR14413:SF16">
    <property type="entry name" value="LARGE RIBOSOMAL SUBUNIT PROTEIN BL17M"/>
    <property type="match status" value="1"/>
</dbReference>
<dbReference type="PANTHER" id="PTHR14413">
    <property type="entry name" value="RIBOSOMAL PROTEIN L17"/>
    <property type="match status" value="1"/>
</dbReference>
<dbReference type="Pfam" id="PF01196">
    <property type="entry name" value="Ribosomal_L17"/>
    <property type="match status" value="1"/>
</dbReference>
<dbReference type="SUPFAM" id="SSF64263">
    <property type="entry name" value="Prokaryotic ribosomal protein L17"/>
    <property type="match status" value="1"/>
</dbReference>
<dbReference type="PROSITE" id="PS01167">
    <property type="entry name" value="RIBOSOMAL_L17"/>
    <property type="match status" value="1"/>
</dbReference>
<feature type="chain" id="PRO_0000267832" description="Large ribosomal subunit protein bL17">
    <location>
        <begin position="1"/>
        <end position="143"/>
    </location>
</feature>
<evidence type="ECO:0000255" key="1">
    <source>
        <dbReference type="HAMAP-Rule" id="MF_01368"/>
    </source>
</evidence>
<evidence type="ECO:0000305" key="2"/>
<keyword id="KW-0687">Ribonucleoprotein</keyword>
<keyword id="KW-0689">Ribosomal protein</keyword>